<name>CDMF_TALVE</name>
<proteinExistence type="evidence at protein level"/>
<reference key="1">
    <citation type="journal article" date="2018" name="Org. Lett.">
        <title>Elucidation and heterologous reconstitution of chrodrimanin B biosynthesis.</title>
        <authorList>
            <person name="Bai T."/>
            <person name="Quan Z."/>
            <person name="Zhai R."/>
            <person name="Awakawa T."/>
            <person name="Matsuda Y."/>
            <person name="Abe I."/>
        </authorList>
    </citation>
    <scope>NUCLEOTIDE SEQUENCE [GENOMIC DNA]</scope>
    <scope>FUNCTION</scope>
    <scope>CATALYTIC ACTIVITY</scope>
    <scope>PATHWAY</scope>
    <source>
        <strain>TPU1311</strain>
    </source>
</reference>
<reference key="2">
    <citation type="journal article" date="2015" name="Bioorg. Med. Chem. Lett.">
        <title>Verruculides A and B, two new protein tyrosine phosphatase 1B inhibitors from an Indonesian ascidian-derived Penicillium verruculosum.</title>
        <authorList>
            <person name="Yamazaki H."/>
            <person name="Nakayama W."/>
            <person name="Takahashi O."/>
            <person name="Kirikoshi R."/>
            <person name="Izumikawa Y."/>
            <person name="Iwasaki K."/>
            <person name="Toraiwa K."/>
            <person name="Ukai K."/>
            <person name="Rotinsulu H."/>
            <person name="Wewengkang D.S."/>
            <person name="Sumilat D.A."/>
            <person name="Mangindaan R.E."/>
            <person name="Namikoshi M."/>
        </authorList>
    </citation>
    <scope>BIOTECHNOLOGY</scope>
</reference>
<reference key="3">
    <citation type="journal article" date="2015" name="PLoS ONE">
        <title>Meroterpenoid Chrodrimanins Are Selective and Potent Blockers of Insect GABA-Gated Chloride Channels.</title>
        <authorList>
            <person name="Xu Y."/>
            <person name="Furutani S."/>
            <person name="Ihara M."/>
            <person name="Ling Y."/>
            <person name="Yang X."/>
            <person name="Kai K."/>
            <person name="Hayashi H."/>
            <person name="Matsuda K."/>
        </authorList>
    </citation>
    <scope>BIOTECHNOLOGY</scope>
</reference>
<sequence>MGLLQDYVIIVTGSASGIGYATSSTALREGAHVFGVDVSPLPADLCDHPNFQSFQGDLTEDSTAQAVVTACTQAFGNRIDGLLNVAGVLDNFASVDAVTDQIWNKCLAVNLTAPVKLMRAVIPIMRTQKRGSIVNVSSKAGISGGAAGVAYTASKHGLIGVTKNVAWRFKEENIRCNAVCPGGVLTNIGSDIDRESFDMEAFETMKPVQLAHMPDQSKGPRITPEEVAQVMIFLVSGLSSKVNGAVIPVDDAWSTI</sequence>
<organism>
    <name type="scientific">Talaromyces verruculosus</name>
    <name type="common">Penicillium verruculosum</name>
    <dbReference type="NCBI Taxonomy" id="198730"/>
    <lineage>
        <taxon>Eukaryota</taxon>
        <taxon>Fungi</taxon>
        <taxon>Dikarya</taxon>
        <taxon>Ascomycota</taxon>
        <taxon>Pezizomycotina</taxon>
        <taxon>Eurotiomycetes</taxon>
        <taxon>Eurotiomycetidae</taxon>
        <taxon>Eurotiales</taxon>
        <taxon>Trichocomaceae</taxon>
        <taxon>Talaromyces</taxon>
        <taxon>Talaromyces sect. Talaromyces</taxon>
    </lineage>
</organism>
<comment type="function">
    <text evidence="6 9">Short-chain dehydrogenase/reductase; part of the gene cluster that mediates the biosynthesis of chrodrimanin B, a meroterpenoid that acts as a potent blocker of insect GABA-gated chloride channels (PubMed:30417647). The first step of the pathway is the biosynthesis of 6-hydroxymellein by the polyketide synthase cdmE (PubMed:30417647). The prenyltransferase cdmH acts as a 6-hydroxymellein 5-farnesyltransferase and produces the hydrophobic metabolite verruculide C (PubMed:30417647). The FAD-dependent monooxygenase cdmI further converts verruculide C into verruculide B (PubMed:30417647). The terpene cyclase cdmG then produced the pentacyclic molecule 3-hydroxypentacecilide A, the backbone structure of chrodrimanin B, via folding the farnesyl moiety of the substrate into the chair-boat conformation (PubMed:30417647). The short-chain dehydrogenase/reductase cdmF functions as the 3-OH dehydrogenase that oxidizes the C-3 hydroxyl group of 3-hydroxypentacecilide A and produces chrodrimanin C, the dehydrogenated product of 3-hydroxypentacecilide A (PubMed:30417647). The cytochrome P450 monooxygenase cdmJ then accepts both 3-hydroxypentacecilide A and chrodrimanin C and functions as a C-7-beta-hydroxylase to produce respectively chrodrimanin H and chrodrimanin F (PubMed:30417647). The dioxygenase cdmA accepts chrodrimanin H to afford chrodrimanin E, which is further transformed to chrodrimanin A by the dioxygenase cdmD (PubMed:30417647). CdmA can also accept chrodrimanin C as substrate to convert it into verruculide A, which is further converted into chrodrimanin T by cdmD (PubMed:30417647). The last step of the biosynthesis is proposed to be performed by the acetyltransferase cdmC which acetylates chrodrimanin A to yield chrodrimanin B (Probable). The pathway may also lead to the production of additional shunt products, including chrodrimanins T and U (PubMed:30417647).</text>
</comment>
<comment type="catalytic activity">
    <reaction evidence="6">
        <text>3-hydroxypentacecilide A + A = chrodrimanin C + AH2</text>
        <dbReference type="Rhea" id="RHEA:65264"/>
        <dbReference type="ChEBI" id="CHEBI:13193"/>
        <dbReference type="ChEBI" id="CHEBI:17499"/>
        <dbReference type="ChEBI" id="CHEBI:156411"/>
        <dbReference type="ChEBI" id="CHEBI:156412"/>
    </reaction>
    <physiologicalReaction direction="left-to-right" evidence="6">
        <dbReference type="Rhea" id="RHEA:65265"/>
    </physiologicalReaction>
</comment>
<comment type="catalytic activity">
    <reaction evidence="6">
        <text>chrodrimanin F + A = chrodrimanin H + AH2</text>
        <dbReference type="Rhea" id="RHEA:65328"/>
        <dbReference type="ChEBI" id="CHEBI:13193"/>
        <dbReference type="ChEBI" id="CHEBI:17499"/>
        <dbReference type="ChEBI" id="CHEBI:156415"/>
        <dbReference type="ChEBI" id="CHEBI:156416"/>
    </reaction>
    <physiologicalReaction direction="left-to-right" evidence="6">
        <dbReference type="Rhea" id="RHEA:65329"/>
    </physiologicalReaction>
</comment>
<comment type="pathway">
    <text evidence="6">Secondary metabolite biosynthesis; terpenoid biosynthesis.</text>
</comment>
<comment type="biotechnology">
    <text evidence="4 5">Compounds in the chrodrimanin family such as chrodrimanin A or verruculide A exhibit strong inhibitory activities against protein tyrosine phosphatase 1B (PTP1B) and therefore, they could potentially be developed into drugs for the treatment of type 2 diabetes or obesity (PubMed:26115570). Furthermore, chrodrimanin B, the end product of the pathway involving chrodrimanin A or verruculide A, does not exhibit the PTP1B inhibitory activity, while it functions as a potent blocker of insect GABA-gated chloride channels (PubMed:25902139).</text>
</comment>
<comment type="similarity">
    <text evidence="8">Belongs to the short-chain dehydrogenases/reductases (SDR) family.</text>
</comment>
<dbReference type="EC" id="1.1.1.-" evidence="6"/>
<dbReference type="EMBL" id="LC422696">
    <property type="protein sequence ID" value="BBG28485.1"/>
    <property type="molecule type" value="Genomic_DNA"/>
</dbReference>
<dbReference type="SMR" id="A0A3G9HAL8"/>
<dbReference type="UniPathway" id="UPA00213"/>
<dbReference type="GO" id="GO:0016491">
    <property type="term" value="F:oxidoreductase activity"/>
    <property type="evidence" value="ECO:0007669"/>
    <property type="project" value="UniProtKB-KW"/>
</dbReference>
<dbReference type="GO" id="GO:0044550">
    <property type="term" value="P:secondary metabolite biosynthetic process"/>
    <property type="evidence" value="ECO:0007669"/>
    <property type="project" value="UniProtKB-ARBA"/>
</dbReference>
<dbReference type="GO" id="GO:0016114">
    <property type="term" value="P:terpenoid biosynthetic process"/>
    <property type="evidence" value="ECO:0007669"/>
    <property type="project" value="UniProtKB-UniPathway"/>
</dbReference>
<dbReference type="CDD" id="cd05233">
    <property type="entry name" value="SDR_c"/>
    <property type="match status" value="1"/>
</dbReference>
<dbReference type="FunFam" id="3.40.50.720:FF:000084">
    <property type="entry name" value="Short-chain dehydrogenase reductase"/>
    <property type="match status" value="1"/>
</dbReference>
<dbReference type="Gene3D" id="3.40.50.720">
    <property type="entry name" value="NAD(P)-binding Rossmann-like Domain"/>
    <property type="match status" value="1"/>
</dbReference>
<dbReference type="InterPro" id="IPR036291">
    <property type="entry name" value="NAD(P)-bd_dom_sf"/>
</dbReference>
<dbReference type="InterPro" id="IPR020904">
    <property type="entry name" value="Sc_DH/Rdtase_CS"/>
</dbReference>
<dbReference type="InterPro" id="IPR002347">
    <property type="entry name" value="SDR_fam"/>
</dbReference>
<dbReference type="PANTHER" id="PTHR24321">
    <property type="entry name" value="DEHYDROGENASES, SHORT CHAIN"/>
    <property type="match status" value="1"/>
</dbReference>
<dbReference type="PANTHER" id="PTHR24321:SF8">
    <property type="entry name" value="ESTRADIOL 17-BETA-DEHYDROGENASE 8-RELATED"/>
    <property type="match status" value="1"/>
</dbReference>
<dbReference type="Pfam" id="PF00106">
    <property type="entry name" value="adh_short"/>
    <property type="match status" value="1"/>
</dbReference>
<dbReference type="PRINTS" id="PR00081">
    <property type="entry name" value="GDHRDH"/>
</dbReference>
<dbReference type="PRINTS" id="PR00080">
    <property type="entry name" value="SDRFAMILY"/>
</dbReference>
<dbReference type="SUPFAM" id="SSF51735">
    <property type="entry name" value="NAD(P)-binding Rossmann-fold domains"/>
    <property type="match status" value="1"/>
</dbReference>
<dbReference type="PROSITE" id="PS00061">
    <property type="entry name" value="ADH_SHORT"/>
    <property type="match status" value="1"/>
</dbReference>
<gene>
    <name evidence="7" type="primary">cdmF</name>
</gene>
<protein>
    <recommendedName>
        <fullName evidence="7">Short-chain dehydrogenase/reductase cdmF</fullName>
        <ecNumber evidence="6">1.1.1.-</ecNumber>
    </recommendedName>
    <alternativeName>
        <fullName evidence="7">chrodrimanin B biosynthesis cluster protein F</fullName>
    </alternativeName>
</protein>
<evidence type="ECO:0000250" key="1">
    <source>
        <dbReference type="UniProtKB" id="L0E2Z4"/>
    </source>
</evidence>
<evidence type="ECO:0000250" key="2">
    <source>
        <dbReference type="UniProtKB" id="O93868"/>
    </source>
</evidence>
<evidence type="ECO:0000255" key="3">
    <source>
        <dbReference type="PROSITE-ProRule" id="PRU10001"/>
    </source>
</evidence>
<evidence type="ECO:0000269" key="4">
    <source>
    </source>
</evidence>
<evidence type="ECO:0000269" key="5">
    <source>
    </source>
</evidence>
<evidence type="ECO:0000269" key="6">
    <source>
    </source>
</evidence>
<evidence type="ECO:0000303" key="7">
    <source>
    </source>
</evidence>
<evidence type="ECO:0000305" key="8"/>
<evidence type="ECO:0000305" key="9">
    <source>
    </source>
</evidence>
<keyword id="KW-0521">NADP</keyword>
<keyword id="KW-0560">Oxidoreductase</keyword>
<feature type="chain" id="PRO_0000449131" description="Short-chain dehydrogenase/reductase cdmF">
    <location>
        <begin position="1"/>
        <end position="256"/>
    </location>
</feature>
<feature type="active site" description="Proton donor" evidence="2">
    <location>
        <position position="137"/>
    </location>
</feature>
<feature type="active site" description="Proton acceptor" evidence="3">
    <location>
        <position position="151"/>
    </location>
</feature>
<feature type="active site" description="Lowers pKa of active site Tyr" evidence="2">
    <location>
        <position position="155"/>
    </location>
</feature>
<feature type="binding site" evidence="1">
    <location>
        <position position="11"/>
    </location>
    <ligand>
        <name>NADP(+)</name>
        <dbReference type="ChEBI" id="CHEBI:58349"/>
    </ligand>
</feature>
<feature type="binding site" evidence="1">
    <location>
        <position position="57"/>
    </location>
    <ligand>
        <name>NADP(+)</name>
        <dbReference type="ChEBI" id="CHEBI:58349"/>
    </ligand>
</feature>
<feature type="binding site" evidence="1">
    <location>
        <position position="119"/>
    </location>
    <ligand>
        <name>NADP(+)</name>
        <dbReference type="ChEBI" id="CHEBI:58349"/>
    </ligand>
</feature>
<feature type="binding site" evidence="2">
    <location>
        <position position="151"/>
    </location>
    <ligand>
        <name>NADP(+)</name>
        <dbReference type="ChEBI" id="CHEBI:58349"/>
    </ligand>
</feature>
<feature type="binding site" evidence="2">
    <location>
        <position position="155"/>
    </location>
    <ligand>
        <name>NADP(+)</name>
        <dbReference type="ChEBI" id="CHEBI:58349"/>
    </ligand>
</feature>
<feature type="binding site" evidence="2">
    <location>
        <position position="183"/>
    </location>
    <ligand>
        <name>NADP(+)</name>
        <dbReference type="ChEBI" id="CHEBI:58349"/>
    </ligand>
</feature>
<feature type="binding site" evidence="2">
    <location>
        <position position="187"/>
    </location>
    <ligand>
        <name>NADP(+)</name>
        <dbReference type="ChEBI" id="CHEBI:58349"/>
    </ligand>
</feature>
<accession>A0A3G9HAL8</accession>